<accession>Q9I701</accession>
<gene>
    <name type="primary">bauB</name>
    <name type="ordered locus">PA0131</name>
</gene>
<evidence type="ECO:0000255" key="1"/>
<evidence type="ECO:0000269" key="2">
    <source>
    </source>
</evidence>
<comment type="function">
    <text evidence="2">Involved in the degradation of beta-alanine.</text>
</comment>
<comment type="induction">
    <text evidence="2">Activated by BauR.</text>
</comment>
<comment type="disruption phenotype">
    <text evidence="2">Cells lacking this gene grow normally on putrescine, cadaverine, and GABA, but growth on beta-alanine is completely abolished.</text>
</comment>
<reference key="1">
    <citation type="journal article" date="2000" name="Nature">
        <title>Complete genome sequence of Pseudomonas aeruginosa PAO1, an opportunistic pathogen.</title>
        <authorList>
            <person name="Stover C.K."/>
            <person name="Pham X.-Q.T."/>
            <person name="Erwin A.L."/>
            <person name="Mizoguchi S.D."/>
            <person name="Warrener P."/>
            <person name="Hickey M.J."/>
            <person name="Brinkman F.S.L."/>
            <person name="Hufnagle W.O."/>
            <person name="Kowalik D.J."/>
            <person name="Lagrou M."/>
            <person name="Garber R.L."/>
            <person name="Goltry L."/>
            <person name="Tolentino E."/>
            <person name="Westbrock-Wadman S."/>
            <person name="Yuan Y."/>
            <person name="Brody L.L."/>
            <person name="Coulter S.N."/>
            <person name="Folger K.R."/>
            <person name="Kas A."/>
            <person name="Larbig K."/>
            <person name="Lim R.M."/>
            <person name="Smith K.A."/>
            <person name="Spencer D.H."/>
            <person name="Wong G.K.-S."/>
            <person name="Wu Z."/>
            <person name="Paulsen I.T."/>
            <person name="Reizer J."/>
            <person name="Saier M.H. Jr."/>
            <person name="Hancock R.E.W."/>
            <person name="Lory S."/>
            <person name="Olson M.V."/>
        </authorList>
    </citation>
    <scope>NUCLEOTIDE SEQUENCE [LARGE SCALE GENOMIC DNA]</scope>
    <source>
        <strain>ATCC 15692 / DSM 22644 / CIP 104116 / JCM 14847 / LMG 12228 / 1C / PRS 101 / PAO1</strain>
    </source>
</reference>
<reference key="2">
    <citation type="journal article" date="2011" name="J. Bacteriol.">
        <title>Functional characterization of seven gamma-glutamylpolyamine synthetase genes and the bauRABCD locus for polyamine and beta-alanine utilization in Pseudomonas aeruginosa PAO1.</title>
        <authorList>
            <person name="Yao X."/>
            <person name="He W."/>
            <person name="Lu C.D."/>
        </authorList>
    </citation>
    <scope>FUNCTION</scope>
    <scope>INDUCTION</scope>
    <scope>DISRUPTION PHENOTYPE</scope>
</reference>
<proteinExistence type="evidence at transcript level"/>
<keyword id="KW-1185">Reference proteome</keyword>
<sequence length="95" mass="10394">MSGRPQAVPTVQVDNAEVIVTEWRFAPGAETGRHRHGHDYVVVPLTDGTLLLETPEGDRHAPLVAGQAYFRKAGVEHNVINASAHEVVFVETEIK</sequence>
<dbReference type="EMBL" id="AE004091">
    <property type="protein sequence ID" value="AAG03521.1"/>
    <property type="molecule type" value="Genomic_DNA"/>
</dbReference>
<dbReference type="PIR" id="E83628">
    <property type="entry name" value="E83628"/>
</dbReference>
<dbReference type="RefSeq" id="NP_248821.1">
    <property type="nucleotide sequence ID" value="NC_002516.2"/>
</dbReference>
<dbReference type="RefSeq" id="WP_003083790.1">
    <property type="nucleotide sequence ID" value="NZ_QZGE01000015.1"/>
</dbReference>
<dbReference type="SMR" id="Q9I701"/>
<dbReference type="STRING" id="208964.PA0131"/>
<dbReference type="PaxDb" id="208964-PA0131"/>
<dbReference type="GeneID" id="77218677"/>
<dbReference type="GeneID" id="878383"/>
<dbReference type="KEGG" id="pae:PA0131"/>
<dbReference type="PATRIC" id="fig|208964.12.peg.136"/>
<dbReference type="PseudoCAP" id="PA0131"/>
<dbReference type="HOGENOM" id="CLU_130991_3_0_6"/>
<dbReference type="InParanoid" id="Q9I701"/>
<dbReference type="OrthoDB" id="9800684at2"/>
<dbReference type="PhylomeDB" id="Q9I701"/>
<dbReference type="BioCyc" id="PAER208964:G1FZ6-133-MONOMER"/>
<dbReference type="Proteomes" id="UP000002438">
    <property type="component" value="Chromosome"/>
</dbReference>
<dbReference type="GO" id="GO:0019483">
    <property type="term" value="P:beta-alanine biosynthetic process"/>
    <property type="evidence" value="ECO:0000314"/>
    <property type="project" value="PseudoCAP"/>
</dbReference>
<dbReference type="CDD" id="cd06982">
    <property type="entry name" value="cupin_BauB-like"/>
    <property type="match status" value="1"/>
</dbReference>
<dbReference type="FunFam" id="2.60.120.10:FF:000168">
    <property type="entry name" value="Cupin domain-containing protein"/>
    <property type="match status" value="1"/>
</dbReference>
<dbReference type="Gene3D" id="2.60.120.10">
    <property type="entry name" value="Jelly Rolls"/>
    <property type="match status" value="1"/>
</dbReference>
<dbReference type="InterPro" id="IPR013096">
    <property type="entry name" value="Cupin_2"/>
</dbReference>
<dbReference type="InterPro" id="IPR014710">
    <property type="entry name" value="RmlC-like_jellyroll"/>
</dbReference>
<dbReference type="InterPro" id="IPR011051">
    <property type="entry name" value="RmlC_Cupin_sf"/>
</dbReference>
<dbReference type="Pfam" id="PF07883">
    <property type="entry name" value="Cupin_2"/>
    <property type="match status" value="1"/>
</dbReference>
<dbReference type="SUPFAM" id="SSF51182">
    <property type="entry name" value="RmlC-like cupins"/>
    <property type="match status" value="1"/>
</dbReference>
<name>BAUB_PSEAE</name>
<feature type="chain" id="PRO_0000428974" description="Beta-alanine degradation protein BauB">
    <location>
        <begin position="1"/>
        <end position="95"/>
    </location>
</feature>
<feature type="domain" description="Cupin type-2" evidence="1">
    <location>
        <begin position="23"/>
        <end position="90"/>
    </location>
</feature>
<organism>
    <name type="scientific">Pseudomonas aeruginosa (strain ATCC 15692 / DSM 22644 / CIP 104116 / JCM 14847 / LMG 12228 / 1C / PRS 101 / PAO1)</name>
    <dbReference type="NCBI Taxonomy" id="208964"/>
    <lineage>
        <taxon>Bacteria</taxon>
        <taxon>Pseudomonadati</taxon>
        <taxon>Pseudomonadota</taxon>
        <taxon>Gammaproteobacteria</taxon>
        <taxon>Pseudomonadales</taxon>
        <taxon>Pseudomonadaceae</taxon>
        <taxon>Pseudomonas</taxon>
    </lineage>
</organism>
<protein>
    <recommendedName>
        <fullName>Beta-alanine degradation protein BauB</fullName>
    </recommendedName>
</protein>